<reference key="1">
    <citation type="submission" date="2006-06" db="EMBL/GenBank/DDBJ databases">
        <title>Complete sequence of chromosome of Mesorhizobium sp. BNC1.</title>
        <authorList>
            <consortium name="US DOE Joint Genome Institute"/>
            <person name="Copeland A."/>
            <person name="Lucas S."/>
            <person name="Lapidus A."/>
            <person name="Barry K."/>
            <person name="Detter J.C."/>
            <person name="Glavina del Rio T."/>
            <person name="Hammon N."/>
            <person name="Israni S."/>
            <person name="Dalin E."/>
            <person name="Tice H."/>
            <person name="Pitluck S."/>
            <person name="Chertkov O."/>
            <person name="Brettin T."/>
            <person name="Bruce D."/>
            <person name="Han C."/>
            <person name="Tapia R."/>
            <person name="Gilna P."/>
            <person name="Schmutz J."/>
            <person name="Larimer F."/>
            <person name="Land M."/>
            <person name="Hauser L."/>
            <person name="Kyrpides N."/>
            <person name="Mikhailova N."/>
            <person name="Richardson P."/>
        </authorList>
    </citation>
    <scope>NUCLEOTIDE SEQUENCE [LARGE SCALE GENOMIC DNA]</scope>
    <source>
        <strain>BNC1</strain>
    </source>
</reference>
<dbReference type="EC" id="6.1.1.17" evidence="1"/>
<dbReference type="EMBL" id="CP000390">
    <property type="protein sequence ID" value="ABG63040.1"/>
    <property type="molecule type" value="Genomic_DNA"/>
</dbReference>
<dbReference type="SMR" id="Q11HT5"/>
<dbReference type="STRING" id="266779.Meso_1645"/>
<dbReference type="KEGG" id="mes:Meso_1645"/>
<dbReference type="eggNOG" id="COG0008">
    <property type="taxonomic scope" value="Bacteria"/>
</dbReference>
<dbReference type="HOGENOM" id="CLU_015768_6_3_5"/>
<dbReference type="OrthoDB" id="9807503at2"/>
<dbReference type="GO" id="GO:0005829">
    <property type="term" value="C:cytosol"/>
    <property type="evidence" value="ECO:0007669"/>
    <property type="project" value="TreeGrafter"/>
</dbReference>
<dbReference type="GO" id="GO:0005524">
    <property type="term" value="F:ATP binding"/>
    <property type="evidence" value="ECO:0007669"/>
    <property type="project" value="UniProtKB-UniRule"/>
</dbReference>
<dbReference type="GO" id="GO:0004818">
    <property type="term" value="F:glutamate-tRNA ligase activity"/>
    <property type="evidence" value="ECO:0007669"/>
    <property type="project" value="UniProtKB-UniRule"/>
</dbReference>
<dbReference type="GO" id="GO:0000049">
    <property type="term" value="F:tRNA binding"/>
    <property type="evidence" value="ECO:0007669"/>
    <property type="project" value="InterPro"/>
</dbReference>
<dbReference type="GO" id="GO:0008270">
    <property type="term" value="F:zinc ion binding"/>
    <property type="evidence" value="ECO:0007669"/>
    <property type="project" value="InterPro"/>
</dbReference>
<dbReference type="GO" id="GO:0006424">
    <property type="term" value="P:glutamyl-tRNA aminoacylation"/>
    <property type="evidence" value="ECO:0007669"/>
    <property type="project" value="UniProtKB-UniRule"/>
</dbReference>
<dbReference type="CDD" id="cd00808">
    <property type="entry name" value="GluRS_core"/>
    <property type="match status" value="1"/>
</dbReference>
<dbReference type="FunFam" id="3.40.50.620:FF:000007">
    <property type="entry name" value="Glutamate--tRNA ligase"/>
    <property type="match status" value="1"/>
</dbReference>
<dbReference type="Gene3D" id="1.10.10.350">
    <property type="match status" value="1"/>
</dbReference>
<dbReference type="Gene3D" id="3.40.50.620">
    <property type="entry name" value="HUPs"/>
    <property type="match status" value="1"/>
</dbReference>
<dbReference type="HAMAP" id="MF_00022">
    <property type="entry name" value="Glu_tRNA_synth_type1"/>
    <property type="match status" value="1"/>
</dbReference>
<dbReference type="InterPro" id="IPR045462">
    <property type="entry name" value="aa-tRNA-synth_I_cd-bd"/>
</dbReference>
<dbReference type="InterPro" id="IPR020751">
    <property type="entry name" value="aa-tRNA-synth_I_codon-bd_sub2"/>
</dbReference>
<dbReference type="InterPro" id="IPR001412">
    <property type="entry name" value="aa-tRNA-synth_I_CS"/>
</dbReference>
<dbReference type="InterPro" id="IPR008925">
    <property type="entry name" value="aa_tRNA-synth_I_cd-bd_sf"/>
</dbReference>
<dbReference type="InterPro" id="IPR004527">
    <property type="entry name" value="Glu-tRNA-ligase_bac/mito"/>
</dbReference>
<dbReference type="InterPro" id="IPR000924">
    <property type="entry name" value="Glu/Gln-tRNA-synth"/>
</dbReference>
<dbReference type="InterPro" id="IPR020058">
    <property type="entry name" value="Glu/Gln-tRNA-synth_Ib_cat-dom"/>
</dbReference>
<dbReference type="InterPro" id="IPR049940">
    <property type="entry name" value="GluQ/Sye"/>
</dbReference>
<dbReference type="InterPro" id="IPR033910">
    <property type="entry name" value="GluRS_core"/>
</dbReference>
<dbReference type="InterPro" id="IPR014729">
    <property type="entry name" value="Rossmann-like_a/b/a_fold"/>
</dbReference>
<dbReference type="NCBIfam" id="TIGR00464">
    <property type="entry name" value="gltX_bact"/>
    <property type="match status" value="1"/>
</dbReference>
<dbReference type="PANTHER" id="PTHR43311">
    <property type="entry name" value="GLUTAMATE--TRNA LIGASE"/>
    <property type="match status" value="1"/>
</dbReference>
<dbReference type="PANTHER" id="PTHR43311:SF2">
    <property type="entry name" value="GLUTAMATE--TRNA LIGASE, MITOCHONDRIAL-RELATED"/>
    <property type="match status" value="1"/>
</dbReference>
<dbReference type="Pfam" id="PF19269">
    <property type="entry name" value="Anticodon_2"/>
    <property type="match status" value="1"/>
</dbReference>
<dbReference type="Pfam" id="PF00749">
    <property type="entry name" value="tRNA-synt_1c"/>
    <property type="match status" value="1"/>
</dbReference>
<dbReference type="PRINTS" id="PR00987">
    <property type="entry name" value="TRNASYNTHGLU"/>
</dbReference>
<dbReference type="SUPFAM" id="SSF48163">
    <property type="entry name" value="An anticodon-binding domain of class I aminoacyl-tRNA synthetases"/>
    <property type="match status" value="1"/>
</dbReference>
<dbReference type="SUPFAM" id="SSF52374">
    <property type="entry name" value="Nucleotidylyl transferase"/>
    <property type="match status" value="1"/>
</dbReference>
<dbReference type="PROSITE" id="PS00178">
    <property type="entry name" value="AA_TRNA_LIGASE_I"/>
    <property type="match status" value="1"/>
</dbReference>
<evidence type="ECO:0000255" key="1">
    <source>
        <dbReference type="HAMAP-Rule" id="MF_00022"/>
    </source>
</evidence>
<evidence type="ECO:0000256" key="2">
    <source>
        <dbReference type="SAM" id="MobiDB-lite"/>
    </source>
</evidence>
<organism>
    <name type="scientific">Chelativorans sp. (strain BNC1)</name>
    <dbReference type="NCBI Taxonomy" id="266779"/>
    <lineage>
        <taxon>Bacteria</taxon>
        <taxon>Pseudomonadati</taxon>
        <taxon>Pseudomonadota</taxon>
        <taxon>Alphaproteobacteria</taxon>
        <taxon>Hyphomicrobiales</taxon>
        <taxon>Phyllobacteriaceae</taxon>
        <taxon>Chelativorans</taxon>
    </lineage>
</organism>
<gene>
    <name evidence="1" type="primary">gltX2</name>
    <name type="ordered locus">Meso_1645</name>
</gene>
<proteinExistence type="inferred from homology"/>
<accession>Q11HT5</accession>
<name>SYE2_CHESB</name>
<keyword id="KW-0030">Aminoacyl-tRNA synthetase</keyword>
<keyword id="KW-0067">ATP-binding</keyword>
<keyword id="KW-0963">Cytoplasm</keyword>
<keyword id="KW-0436">Ligase</keyword>
<keyword id="KW-0547">Nucleotide-binding</keyword>
<keyword id="KW-0648">Protein biosynthesis</keyword>
<protein>
    <recommendedName>
        <fullName evidence="1">Glutamate--tRNA ligase 2</fullName>
        <ecNumber evidence="1">6.1.1.17</ecNumber>
    </recommendedName>
    <alternativeName>
        <fullName evidence="1">Glutamyl-tRNA synthetase 2</fullName>
        <shortName evidence="1">GluRS 2</shortName>
    </alternativeName>
</protein>
<feature type="chain" id="PRO_0000367706" description="Glutamate--tRNA ligase 2">
    <location>
        <begin position="1"/>
        <end position="475"/>
    </location>
</feature>
<feature type="region of interest" description="Disordered" evidence="2">
    <location>
        <begin position="116"/>
        <end position="137"/>
    </location>
</feature>
<feature type="short sequence motif" description="'HIGH' region" evidence="1">
    <location>
        <begin position="11"/>
        <end position="21"/>
    </location>
</feature>
<feature type="short sequence motif" description="'KMSKS' region" evidence="1">
    <location>
        <begin position="240"/>
        <end position="244"/>
    </location>
</feature>
<feature type="compositionally biased region" description="Basic and acidic residues" evidence="2">
    <location>
        <begin position="116"/>
        <end position="133"/>
    </location>
</feature>
<feature type="binding site" evidence="1">
    <location>
        <position position="243"/>
    </location>
    <ligand>
        <name>ATP</name>
        <dbReference type="ChEBI" id="CHEBI:30616"/>
    </ligand>
</feature>
<sequence>MKTPVITRFAPSPTGFLHIGGARTALFNWLYARHTGGRMLLRIEDTDRQRSTPEATAAILDGLAWLGLTWDGEPISQFARASRHKEVAEELVARGQAYYCYCSPEEIEAMREKARAEGRPPRYDGTWRDKDPAEAPSGVKPVIRIKAPLEGETVIHDRVQGDVRFPNKDLDDFIILRSDGTPTYMHAVVVDDHDMGVTHVIRGDDHLTNAARQAIIYRAMGWDIPVMAHIPLIHGPDGGKLSKRHGALGVEAYRAMGYLPSALCNYLARLGWSHGDDEVMTTEQMIEWFDIDDVNKGAARFDFQKMEALNGIHMRQMDDEALFGIFIATLPHLEGGQAFLDKLDEKRRGQLRSALPGLKERAKTLLELLDGAGFLVAERPLTIDDKAAELLDGDARAMLATLAEEMAGLGDWTAESTEAAVRNFAENTGRKLGKVAQPLRAALTGRTTSPGIFDVLAVLGREESLGRIRDQAVEK</sequence>
<comment type="function">
    <text evidence="1">Catalyzes the attachment of glutamate to tRNA(Glu) in a two-step reaction: glutamate is first activated by ATP to form Glu-AMP and then transferred to the acceptor end of tRNA(Glu).</text>
</comment>
<comment type="catalytic activity">
    <reaction evidence="1">
        <text>tRNA(Glu) + L-glutamate + ATP = L-glutamyl-tRNA(Glu) + AMP + diphosphate</text>
        <dbReference type="Rhea" id="RHEA:23540"/>
        <dbReference type="Rhea" id="RHEA-COMP:9663"/>
        <dbReference type="Rhea" id="RHEA-COMP:9680"/>
        <dbReference type="ChEBI" id="CHEBI:29985"/>
        <dbReference type="ChEBI" id="CHEBI:30616"/>
        <dbReference type="ChEBI" id="CHEBI:33019"/>
        <dbReference type="ChEBI" id="CHEBI:78442"/>
        <dbReference type="ChEBI" id="CHEBI:78520"/>
        <dbReference type="ChEBI" id="CHEBI:456215"/>
        <dbReference type="EC" id="6.1.1.17"/>
    </reaction>
</comment>
<comment type="subunit">
    <text evidence="1">Monomer.</text>
</comment>
<comment type="subcellular location">
    <subcellularLocation>
        <location evidence="1">Cytoplasm</location>
    </subcellularLocation>
</comment>
<comment type="similarity">
    <text evidence="1">Belongs to the class-I aminoacyl-tRNA synthetase family. Glutamate--tRNA ligase type 1 subfamily.</text>
</comment>